<name>TBL3_HUMAN</name>
<feature type="initiator methionine" description="Removed" evidence="9">
    <location>
        <position position="1"/>
    </location>
</feature>
<feature type="chain" id="PRO_0000051272" description="Transducin beta-like protein 3">
    <location>
        <begin position="2"/>
        <end position="808"/>
    </location>
</feature>
<feature type="repeat" description="WD 1">
    <location>
        <begin position="64"/>
        <end position="105"/>
    </location>
</feature>
<feature type="repeat" description="WD 2">
    <location>
        <begin position="107"/>
        <end position="146"/>
    </location>
</feature>
<feature type="repeat" description="WD 3">
    <location>
        <begin position="149"/>
        <end position="190"/>
    </location>
</feature>
<feature type="repeat" description="WD 4">
    <location>
        <begin position="193"/>
        <end position="232"/>
    </location>
</feature>
<feature type="repeat" description="WD 5">
    <location>
        <begin position="245"/>
        <end position="284"/>
    </location>
</feature>
<feature type="repeat" description="WD 6">
    <location>
        <begin position="290"/>
        <end position="329"/>
    </location>
</feature>
<feature type="repeat" description="WD 7">
    <location>
        <begin position="332"/>
        <end position="372"/>
    </location>
</feature>
<feature type="repeat" description="WD 8">
    <location>
        <begin position="374"/>
        <end position="413"/>
    </location>
</feature>
<feature type="repeat" description="WD 9">
    <location>
        <begin position="419"/>
        <end position="459"/>
    </location>
</feature>
<feature type="repeat" description="WD 10">
    <location>
        <begin position="477"/>
        <end position="516"/>
    </location>
</feature>
<feature type="repeat" description="WD 11">
    <location>
        <begin position="519"/>
        <end position="560"/>
    </location>
</feature>
<feature type="repeat" description="WD 12">
    <location>
        <begin position="562"/>
        <end position="602"/>
    </location>
</feature>
<feature type="repeat" description="WD 13">
    <location>
        <begin position="604"/>
        <end position="642"/>
    </location>
</feature>
<feature type="modified residue" description="N-acetylalanine" evidence="9">
    <location>
        <position position="2"/>
    </location>
</feature>
<feature type="modified residue" description="Phosphoserine" evidence="10">
    <location>
        <position position="257"/>
    </location>
</feature>
<feature type="cross-link" description="Glycyl lysine isopeptide (Lys-Gly) (interchain with G-Cter in SUMO2)" evidence="11">
    <location>
        <position position="407"/>
    </location>
</feature>
<feature type="sequence variant" id="VAR_054320" description="In dbSNP:rs2230086." evidence="3">
    <original>Q</original>
    <variation>R</variation>
    <location>
        <position position="293"/>
    </location>
</feature>
<feature type="sequence variant" id="VAR_054321" description="In dbSNP:rs8052713.">
    <original>E</original>
    <variation>Q</variation>
    <location>
        <position position="294"/>
    </location>
</feature>
<feature type="sequence variant" id="VAR_014479" description="In dbSNP:rs17605." evidence="3">
    <original>S</original>
    <variation>P</variation>
    <location>
        <position position="457"/>
    </location>
</feature>
<feature type="sequence conflict" description="In Ref. 5; AAH35409." evidence="4" ref="5">
    <original>W</original>
    <variation>S</variation>
    <location>
        <position position="104"/>
    </location>
</feature>
<feature type="sequence conflict" description="In Ref. 1; AAA18945." evidence="4" ref="1">
    <original>Q</original>
    <variation>H</variation>
    <location>
        <position position="472"/>
    </location>
</feature>
<feature type="sequence conflict" description="In Ref. 1; AAA18945." evidence="4" ref="1">
    <original>V</original>
    <variation>L</variation>
    <location>
        <position position="566"/>
    </location>
</feature>
<feature type="sequence conflict" description="In Ref. 1; AAA18945." evidence="4" ref="1">
    <original>EQ</original>
    <variation>DE</variation>
    <location>
        <begin position="639"/>
        <end position="640"/>
    </location>
</feature>
<sequence length="808" mass="89035">MAETAAGVGRFKTNYAVERKIEPFYKGGKAQLDQTGQHLFCVCGTRVNILEVASGAVLRSLEQEDQEDITAFDLSPDNEVLVTASRALLLAQWAWQEGSVTRLWKAIHTAPVATMAFDPTSTLLATGGCDGAVRVWDIVRHYGTHHFRGSPGVVHLVAFHPDPTRLLLFSSATDAAIRVWSLQDRSCLAVLTAHYSAVTSLAFSADGHTMLSSGRDKICIIWDLQSCQATRTVPVFESVEAAVLLPEEPVSQLGVKSPGLYFLTAGDQGTLRVWEAASGQCVYTQAQPPGPGQELTHCTLAHTAGVVLTATADHNLLLYEARSLRLQKQFAGYSEEVLDVRFLGPEDSHVVVASNSPCLKVFELQTSACQILHGHTDIVLALDVFRKGWLFASCAKDQSVRIWRMNKAGQVMCVAQGSGHTHSVGTVCCSRLKESFLVTGSQDCTVKLWPLPKALLSKNTAPDNGPILLQAQTTQRCHDKDINSVAIAPNDKLLATGSQDRTAKLWALPQCQLLGVFSGHRRGLWCVQFSPMDQVLATASADGTIKLWALQDFSCLKTFEGHDASVLKVAFVSRGTQLLSSGSDGLVKLWTIKNNECVRTLDAHEDKVWGLHCSRLDDHALTGASDSRVILWKDVTEAEQAEEQARQEEQVVRQQELDNLLHEKRYLRALGLAISLDRPHTVLTVIQAIRRDPEACEKLEATMLRLRRDQKEALLRFCVTWNTNSRHCHEAQAVLGVLLRREAPEELLAYEGVRAALEALLPYTERHFQRLSRTLQAAAFLDFLWHNMKLPVPAAAPTPWETHKGALP</sequence>
<comment type="function">
    <text evidence="2">Part of the small subunit (SSU) processome, first precursor of the small eukaryotic ribosomal subunit. During the assembly of the SSU processome in the nucleolus, many ribosome biogenesis factors, an RNA chaperone and ribosomal proteins associate with the nascent pre-rRNA and work in concert to generate RNA folding, modifications, rearrangements and cleavage as well as targeted degradation of pre-ribosomal RNA by the RNA exosome.</text>
</comment>
<comment type="subunit">
    <text evidence="2">Part of the small subunit (SSU) processome, composed of more than 70 proteins and the RNA chaperone small nucleolar RNA (snoRNA) U3.</text>
</comment>
<comment type="interaction">
    <interactant intactId="EBI-715766">
        <id>Q12788</id>
    </interactant>
    <interactant intactId="EBI-743771">
        <id>Q92624</id>
        <label>APPBP2</label>
    </interactant>
    <organismsDiffer>false</organismsDiffer>
    <experiments>4</experiments>
</comment>
<comment type="subcellular location">
    <subcellularLocation>
        <location evidence="1 2">Nucleus</location>
        <location evidence="1 2">Nucleolus</location>
    </subcellularLocation>
</comment>
<comment type="sequence caution" evidence="4">
    <conflict type="frameshift">
        <sequence resource="EMBL-CDS" id="AAA18945"/>
    </conflict>
</comment>
<comment type="sequence caution" evidence="4">
    <conflict type="erroneous initiation">
        <sequence resource="EMBL-CDS" id="BAD92410"/>
    </conflict>
</comment>
<gene>
    <name evidence="5" type="primary">TBL3</name>
    <name type="synonym">SAZD</name>
</gene>
<keyword id="KW-0002">3D-structure</keyword>
<keyword id="KW-0007">Acetylation</keyword>
<keyword id="KW-1017">Isopeptide bond</keyword>
<keyword id="KW-0539">Nucleus</keyword>
<keyword id="KW-0597">Phosphoprotein</keyword>
<keyword id="KW-1267">Proteomics identification</keyword>
<keyword id="KW-1185">Reference proteome</keyword>
<keyword id="KW-0677">Repeat</keyword>
<keyword id="KW-0832">Ubl conjugation</keyword>
<keyword id="KW-0853">WD repeat</keyword>
<organism>
    <name type="scientific">Homo sapiens</name>
    <name type="common">Human</name>
    <dbReference type="NCBI Taxonomy" id="9606"/>
    <lineage>
        <taxon>Eukaryota</taxon>
        <taxon>Metazoa</taxon>
        <taxon>Chordata</taxon>
        <taxon>Craniata</taxon>
        <taxon>Vertebrata</taxon>
        <taxon>Euteleostomi</taxon>
        <taxon>Mammalia</taxon>
        <taxon>Eutheria</taxon>
        <taxon>Euarchontoglires</taxon>
        <taxon>Primates</taxon>
        <taxon>Haplorrhini</taxon>
        <taxon>Catarrhini</taxon>
        <taxon>Hominidae</taxon>
        <taxon>Homo</taxon>
    </lineage>
</organism>
<dbReference type="EMBL" id="U02609">
    <property type="protein sequence ID" value="AAA18945.1"/>
    <property type="status" value="ALT_FRAME"/>
    <property type="molecule type" value="mRNA"/>
</dbReference>
<dbReference type="EMBL" id="AB209173">
    <property type="protein sequence ID" value="BAD92410.1"/>
    <property type="status" value="ALT_INIT"/>
    <property type="molecule type" value="mRNA"/>
</dbReference>
<dbReference type="EMBL" id="AC005363">
    <property type="status" value="NOT_ANNOTATED_CDS"/>
    <property type="molecule type" value="Genomic_DNA"/>
</dbReference>
<dbReference type="EMBL" id="AC005606">
    <property type="status" value="NOT_ANNOTATED_CDS"/>
    <property type="molecule type" value="Genomic_DNA"/>
</dbReference>
<dbReference type="EMBL" id="CH471112">
    <property type="protein sequence ID" value="EAW85589.1"/>
    <property type="molecule type" value="Genomic_DNA"/>
</dbReference>
<dbReference type="EMBL" id="BC010231">
    <property type="protein sequence ID" value="AAH10231.1"/>
    <property type="molecule type" value="mRNA"/>
</dbReference>
<dbReference type="EMBL" id="BC014007">
    <property type="protein sequence ID" value="AAH14007.1"/>
    <property type="molecule type" value="mRNA"/>
</dbReference>
<dbReference type="EMBL" id="BC035409">
    <property type="protein sequence ID" value="AAH35409.1"/>
    <property type="molecule type" value="mRNA"/>
</dbReference>
<dbReference type="CCDS" id="CCDS10453.1"/>
<dbReference type="PIR" id="A49367">
    <property type="entry name" value="A49367"/>
</dbReference>
<dbReference type="RefSeq" id="NP_006444.2">
    <property type="nucleotide sequence ID" value="NM_006453.2"/>
</dbReference>
<dbReference type="PDB" id="7MQ8">
    <property type="method" value="EM"/>
    <property type="resolution" value="3.60 A"/>
    <property type="chains" value="LR=1-808"/>
</dbReference>
<dbReference type="PDB" id="7MQ9">
    <property type="method" value="EM"/>
    <property type="resolution" value="3.87 A"/>
    <property type="chains" value="LR=1-808"/>
</dbReference>
<dbReference type="PDB" id="7MQA">
    <property type="method" value="EM"/>
    <property type="resolution" value="2.70 A"/>
    <property type="chains" value="LR=1-808"/>
</dbReference>
<dbReference type="PDBsum" id="7MQ8"/>
<dbReference type="PDBsum" id="7MQ9"/>
<dbReference type="PDBsum" id="7MQA"/>
<dbReference type="EMDB" id="EMD-23936"/>
<dbReference type="EMDB" id="EMD-23937"/>
<dbReference type="EMDB" id="EMD-23938"/>
<dbReference type="SMR" id="Q12788"/>
<dbReference type="BioGRID" id="115853">
    <property type="interactions" value="219"/>
</dbReference>
<dbReference type="ComplexPortal" id="CPX-2688">
    <property type="entry name" value="UTP-B complex"/>
</dbReference>
<dbReference type="CORUM" id="Q12788"/>
<dbReference type="FunCoup" id="Q12788">
    <property type="interactions" value="2651"/>
</dbReference>
<dbReference type="IntAct" id="Q12788">
    <property type="interactions" value="86"/>
</dbReference>
<dbReference type="MINT" id="Q12788"/>
<dbReference type="STRING" id="9606.ENSP00000454836"/>
<dbReference type="GlyCosmos" id="Q12788">
    <property type="glycosylation" value="2 sites, 1 glycan"/>
</dbReference>
<dbReference type="GlyGen" id="Q12788">
    <property type="glycosylation" value="3 sites, 1 O-linked glycan (2 sites)"/>
</dbReference>
<dbReference type="iPTMnet" id="Q12788"/>
<dbReference type="PhosphoSitePlus" id="Q12788"/>
<dbReference type="SwissPalm" id="Q12788"/>
<dbReference type="BioMuta" id="TBL3"/>
<dbReference type="DMDM" id="223634675"/>
<dbReference type="jPOST" id="Q12788"/>
<dbReference type="MassIVE" id="Q12788"/>
<dbReference type="PaxDb" id="9606-ENSP00000454836"/>
<dbReference type="PeptideAtlas" id="Q12788"/>
<dbReference type="ProteomicsDB" id="58923"/>
<dbReference type="Pumba" id="Q12788"/>
<dbReference type="Antibodypedia" id="23366">
    <property type="antibodies" value="74 antibodies from 16 providers"/>
</dbReference>
<dbReference type="DNASU" id="10607"/>
<dbReference type="Ensembl" id="ENST00000568546.6">
    <property type="protein sequence ID" value="ENSP00000454836.1"/>
    <property type="gene ID" value="ENSG00000183751.16"/>
</dbReference>
<dbReference type="Ensembl" id="ENST00000709263.1">
    <property type="protein sequence ID" value="ENSP00000517587.1"/>
    <property type="gene ID" value="ENSG00000291938.1"/>
</dbReference>
<dbReference type="GeneID" id="10607"/>
<dbReference type="KEGG" id="hsa:10607"/>
<dbReference type="MANE-Select" id="ENST00000568546.6">
    <property type="protein sequence ID" value="ENSP00000454836.1"/>
    <property type="RefSeq nucleotide sequence ID" value="NM_006453.3"/>
    <property type="RefSeq protein sequence ID" value="NP_006444.2"/>
</dbReference>
<dbReference type="UCSC" id="uc002cnu.2">
    <property type="organism name" value="human"/>
</dbReference>
<dbReference type="AGR" id="HGNC:11587"/>
<dbReference type="CTD" id="10607"/>
<dbReference type="DisGeNET" id="10607"/>
<dbReference type="GeneCards" id="TBL3"/>
<dbReference type="HGNC" id="HGNC:11587">
    <property type="gene designation" value="TBL3"/>
</dbReference>
<dbReference type="HPA" id="ENSG00000183751">
    <property type="expression patterns" value="Low tissue specificity"/>
</dbReference>
<dbReference type="MIM" id="605915">
    <property type="type" value="gene"/>
</dbReference>
<dbReference type="neXtProt" id="NX_Q12788"/>
<dbReference type="OpenTargets" id="ENSG00000183751"/>
<dbReference type="PharmGKB" id="PA36351"/>
<dbReference type="VEuPathDB" id="HostDB:ENSG00000183751"/>
<dbReference type="eggNOG" id="KOG0319">
    <property type="taxonomic scope" value="Eukaryota"/>
</dbReference>
<dbReference type="GeneTree" id="ENSGT00940000157651"/>
<dbReference type="InParanoid" id="Q12788"/>
<dbReference type="OMA" id="PYVQRHF"/>
<dbReference type="OrthoDB" id="5414888at2759"/>
<dbReference type="PAN-GO" id="Q12788">
    <property type="GO annotations" value="5 GO annotations based on evolutionary models"/>
</dbReference>
<dbReference type="PhylomeDB" id="Q12788"/>
<dbReference type="TreeFam" id="TF314872"/>
<dbReference type="PathwayCommons" id="Q12788"/>
<dbReference type="Reactome" id="R-HSA-6790901">
    <property type="pathway name" value="rRNA modification in the nucleus and cytosol"/>
</dbReference>
<dbReference type="Reactome" id="R-HSA-6791226">
    <property type="pathway name" value="Major pathway of rRNA processing in the nucleolus and cytosol"/>
</dbReference>
<dbReference type="SignaLink" id="Q12788"/>
<dbReference type="BioGRID-ORCS" id="10607">
    <property type="hits" value="739 hits in 1160 CRISPR screens"/>
</dbReference>
<dbReference type="CD-CODE" id="91857CE7">
    <property type="entry name" value="Nucleolus"/>
</dbReference>
<dbReference type="ChiTaRS" id="TBL3">
    <property type="organism name" value="human"/>
</dbReference>
<dbReference type="GeneWiki" id="TBL3"/>
<dbReference type="GenomeRNAi" id="10607"/>
<dbReference type="Pharos" id="Q12788">
    <property type="development level" value="Tdark"/>
</dbReference>
<dbReference type="PRO" id="PR:Q12788"/>
<dbReference type="Proteomes" id="UP000005640">
    <property type="component" value="Chromosome 16"/>
</dbReference>
<dbReference type="RNAct" id="Q12788">
    <property type="molecule type" value="protein"/>
</dbReference>
<dbReference type="Bgee" id="ENSG00000183751">
    <property type="expression patterns" value="Expressed in right testis and 170 other cell types or tissues"/>
</dbReference>
<dbReference type="ExpressionAtlas" id="Q12788">
    <property type="expression patterns" value="baseline and differential"/>
</dbReference>
<dbReference type="GO" id="GO:0030686">
    <property type="term" value="C:90S preribosome"/>
    <property type="evidence" value="ECO:0000318"/>
    <property type="project" value="GO_Central"/>
</dbReference>
<dbReference type="GO" id="GO:0005730">
    <property type="term" value="C:nucleolus"/>
    <property type="evidence" value="ECO:0000314"/>
    <property type="project" value="HPA"/>
</dbReference>
<dbReference type="GO" id="GO:0005654">
    <property type="term" value="C:nucleoplasm"/>
    <property type="evidence" value="ECO:0000314"/>
    <property type="project" value="HPA"/>
</dbReference>
<dbReference type="GO" id="GO:0032040">
    <property type="term" value="C:small-subunit processome"/>
    <property type="evidence" value="ECO:0000314"/>
    <property type="project" value="UniProtKB"/>
</dbReference>
<dbReference type="GO" id="GO:0003723">
    <property type="term" value="F:RNA binding"/>
    <property type="evidence" value="ECO:0007005"/>
    <property type="project" value="UniProtKB"/>
</dbReference>
<dbReference type="GO" id="GO:0034511">
    <property type="term" value="F:U3 snoRNA binding"/>
    <property type="evidence" value="ECO:0000318"/>
    <property type="project" value="GO_Central"/>
</dbReference>
<dbReference type="GO" id="GO:0000480">
    <property type="term" value="P:endonucleolytic cleavage in 5'-ETS of tricistronic rRNA transcript (SSU-rRNA, 5.8S rRNA, LSU-rRNA)"/>
    <property type="evidence" value="ECO:0000318"/>
    <property type="project" value="GO_Central"/>
</dbReference>
<dbReference type="GO" id="GO:0000472">
    <property type="term" value="P:endonucleolytic cleavage to generate mature 5'-end of SSU-rRNA from (SSU-rRNA, 5.8S rRNA, LSU-rRNA)"/>
    <property type="evidence" value="ECO:0000318"/>
    <property type="project" value="GO_Central"/>
</dbReference>
<dbReference type="GO" id="GO:0042274">
    <property type="term" value="P:ribosomal small subunit biogenesis"/>
    <property type="evidence" value="ECO:0000314"/>
    <property type="project" value="UniProtKB"/>
</dbReference>
<dbReference type="CDD" id="cd00200">
    <property type="entry name" value="WD40"/>
    <property type="match status" value="2"/>
</dbReference>
<dbReference type="FunFam" id="2.130.10.10:FF:000480">
    <property type="entry name" value="Transducin beta like 3"/>
    <property type="match status" value="1"/>
</dbReference>
<dbReference type="FunFam" id="2.130.10.10:FF:000230">
    <property type="entry name" value="Transducin beta-like protein 3"/>
    <property type="match status" value="1"/>
</dbReference>
<dbReference type="FunFam" id="2.130.10.10:FF:000605">
    <property type="entry name" value="Transducin beta-like protein 3"/>
    <property type="match status" value="1"/>
</dbReference>
<dbReference type="FunFam" id="2.130.10.10:FF:000795">
    <property type="entry name" value="Transducin beta-like protein 3"/>
    <property type="match status" value="1"/>
</dbReference>
<dbReference type="Gene3D" id="2.130.10.10">
    <property type="entry name" value="YVTN repeat-like/Quinoprotein amine dehydrogenase"/>
    <property type="match status" value="3"/>
</dbReference>
<dbReference type="InterPro" id="IPR020472">
    <property type="entry name" value="G-protein_beta_WD-40_rep"/>
</dbReference>
<dbReference type="InterPro" id="IPR011044">
    <property type="entry name" value="Quino_amine_DH_bsu"/>
</dbReference>
<dbReference type="InterPro" id="IPR013934">
    <property type="entry name" value="Utp13_C"/>
</dbReference>
<dbReference type="InterPro" id="IPR015943">
    <property type="entry name" value="WD40/YVTN_repeat-like_dom_sf"/>
</dbReference>
<dbReference type="InterPro" id="IPR019775">
    <property type="entry name" value="WD40_repeat_CS"/>
</dbReference>
<dbReference type="InterPro" id="IPR036322">
    <property type="entry name" value="WD40_repeat_dom_sf"/>
</dbReference>
<dbReference type="InterPro" id="IPR001680">
    <property type="entry name" value="WD40_rpt"/>
</dbReference>
<dbReference type="PANTHER" id="PTHR19854">
    <property type="entry name" value="TRANSDUCIN BETA-LIKE 3"/>
    <property type="match status" value="1"/>
</dbReference>
<dbReference type="PANTHER" id="PTHR19854:SF15">
    <property type="entry name" value="TRANSDUCIN BETA-LIKE PROTEIN 3"/>
    <property type="match status" value="1"/>
</dbReference>
<dbReference type="Pfam" id="PF08625">
    <property type="entry name" value="Utp13"/>
    <property type="match status" value="1"/>
</dbReference>
<dbReference type="Pfam" id="PF00400">
    <property type="entry name" value="WD40"/>
    <property type="match status" value="8"/>
</dbReference>
<dbReference type="PRINTS" id="PR00320">
    <property type="entry name" value="GPROTEINBRPT"/>
</dbReference>
<dbReference type="SMART" id="SM00320">
    <property type="entry name" value="WD40"/>
    <property type="match status" value="13"/>
</dbReference>
<dbReference type="SUPFAM" id="SSF101908">
    <property type="entry name" value="Putative isomerase YbhE"/>
    <property type="match status" value="1"/>
</dbReference>
<dbReference type="SUPFAM" id="SSF50978">
    <property type="entry name" value="WD40 repeat-like"/>
    <property type="match status" value="1"/>
</dbReference>
<dbReference type="SUPFAM" id="SSF50969">
    <property type="entry name" value="YVTN repeat-like/Quinoprotein amine dehydrogenase"/>
    <property type="match status" value="1"/>
</dbReference>
<dbReference type="PROSITE" id="PS00678">
    <property type="entry name" value="WD_REPEATS_1"/>
    <property type="match status" value="2"/>
</dbReference>
<dbReference type="PROSITE" id="PS50082">
    <property type="entry name" value="WD_REPEATS_2"/>
    <property type="match status" value="8"/>
</dbReference>
<dbReference type="PROSITE" id="PS50294">
    <property type="entry name" value="WD_REPEATS_REGION"/>
    <property type="match status" value="1"/>
</dbReference>
<protein>
    <recommendedName>
        <fullName>Transducin beta-like protein 3</fullName>
    </recommendedName>
    <alternativeName>
        <fullName>WD repeat-containing protein SAZD</fullName>
    </alternativeName>
</protein>
<accession>Q12788</accession>
<accession>Q59GD6</accession>
<accession>Q8IVB7</accession>
<accession>Q96A78</accession>
<proteinExistence type="evidence at protein level"/>
<evidence type="ECO:0000269" key="1">
    <source>
    </source>
</evidence>
<evidence type="ECO:0000269" key="2">
    <source>
    </source>
</evidence>
<evidence type="ECO:0000269" key="3">
    <source ref="2"/>
</evidence>
<evidence type="ECO:0000305" key="4"/>
<evidence type="ECO:0000312" key="5">
    <source>
        <dbReference type="HGNC" id="HGNC:11587"/>
    </source>
</evidence>
<evidence type="ECO:0007744" key="6">
    <source>
        <dbReference type="PDB" id="7MQ8"/>
    </source>
</evidence>
<evidence type="ECO:0007744" key="7">
    <source>
        <dbReference type="PDB" id="7MQ9"/>
    </source>
</evidence>
<evidence type="ECO:0007744" key="8">
    <source>
        <dbReference type="PDB" id="7MQA"/>
    </source>
</evidence>
<evidence type="ECO:0007744" key="9">
    <source>
    </source>
</evidence>
<evidence type="ECO:0007744" key="10">
    <source>
    </source>
</evidence>
<evidence type="ECO:0007744" key="11">
    <source>
    </source>
</evidence>
<reference key="1">
    <citation type="journal article" date="1993" name="Genomics">
        <title>A transducin-like gene maps to the autosomal dominant polycystic kidney disease gene region.</title>
        <authorList>
            <person name="Weinstat-Saslow D.L."/>
            <person name="Germino G.G."/>
            <person name="Somlo S."/>
            <person name="Reeders S.T."/>
        </authorList>
    </citation>
    <scope>NUCLEOTIDE SEQUENCE [MRNA]</scope>
</reference>
<reference key="2">
    <citation type="submission" date="2005-03" db="EMBL/GenBank/DDBJ databases">
        <authorList>
            <person name="Totoki Y."/>
            <person name="Toyoda A."/>
            <person name="Takeda T."/>
            <person name="Sakaki Y."/>
            <person name="Tanaka A."/>
            <person name="Yokoyama S."/>
            <person name="Ohara O."/>
            <person name="Nagase T."/>
            <person name="Kikuno R.F."/>
        </authorList>
    </citation>
    <scope>NUCLEOTIDE SEQUENCE [LARGE SCALE MRNA]</scope>
    <scope>VARIANTS ARG-293 AND PRO-457</scope>
    <source>
        <tissue>Brain</tissue>
    </source>
</reference>
<reference key="3">
    <citation type="journal article" date="2004" name="Nature">
        <title>The sequence and analysis of duplication-rich human chromosome 16.</title>
        <authorList>
            <person name="Martin J."/>
            <person name="Han C."/>
            <person name="Gordon L.A."/>
            <person name="Terry A."/>
            <person name="Prabhakar S."/>
            <person name="She X."/>
            <person name="Xie G."/>
            <person name="Hellsten U."/>
            <person name="Chan Y.M."/>
            <person name="Altherr M."/>
            <person name="Couronne O."/>
            <person name="Aerts A."/>
            <person name="Bajorek E."/>
            <person name="Black S."/>
            <person name="Blumer H."/>
            <person name="Branscomb E."/>
            <person name="Brown N.C."/>
            <person name="Bruno W.J."/>
            <person name="Buckingham J.M."/>
            <person name="Callen D.F."/>
            <person name="Campbell C.S."/>
            <person name="Campbell M.L."/>
            <person name="Campbell E.W."/>
            <person name="Caoile C."/>
            <person name="Challacombe J.F."/>
            <person name="Chasteen L.A."/>
            <person name="Chertkov O."/>
            <person name="Chi H.C."/>
            <person name="Christensen M."/>
            <person name="Clark L.M."/>
            <person name="Cohn J.D."/>
            <person name="Denys M."/>
            <person name="Detter J.C."/>
            <person name="Dickson M."/>
            <person name="Dimitrijevic-Bussod M."/>
            <person name="Escobar J."/>
            <person name="Fawcett J.J."/>
            <person name="Flowers D."/>
            <person name="Fotopulos D."/>
            <person name="Glavina T."/>
            <person name="Gomez M."/>
            <person name="Gonzales E."/>
            <person name="Goodstein D."/>
            <person name="Goodwin L.A."/>
            <person name="Grady D.L."/>
            <person name="Grigoriev I."/>
            <person name="Groza M."/>
            <person name="Hammon N."/>
            <person name="Hawkins T."/>
            <person name="Haydu L."/>
            <person name="Hildebrand C.E."/>
            <person name="Huang W."/>
            <person name="Israni S."/>
            <person name="Jett J."/>
            <person name="Jewett P.B."/>
            <person name="Kadner K."/>
            <person name="Kimball H."/>
            <person name="Kobayashi A."/>
            <person name="Krawczyk M.-C."/>
            <person name="Leyba T."/>
            <person name="Longmire J.L."/>
            <person name="Lopez F."/>
            <person name="Lou Y."/>
            <person name="Lowry S."/>
            <person name="Ludeman T."/>
            <person name="Manohar C.F."/>
            <person name="Mark G.A."/>
            <person name="McMurray K.L."/>
            <person name="Meincke L.J."/>
            <person name="Morgan J."/>
            <person name="Moyzis R.K."/>
            <person name="Mundt M.O."/>
            <person name="Munk A.C."/>
            <person name="Nandkeshwar R.D."/>
            <person name="Pitluck S."/>
            <person name="Pollard M."/>
            <person name="Predki P."/>
            <person name="Parson-Quintana B."/>
            <person name="Ramirez L."/>
            <person name="Rash S."/>
            <person name="Retterer J."/>
            <person name="Ricke D.O."/>
            <person name="Robinson D.L."/>
            <person name="Rodriguez A."/>
            <person name="Salamov A."/>
            <person name="Saunders E.H."/>
            <person name="Scott D."/>
            <person name="Shough T."/>
            <person name="Stallings R.L."/>
            <person name="Stalvey M."/>
            <person name="Sutherland R.D."/>
            <person name="Tapia R."/>
            <person name="Tesmer J.G."/>
            <person name="Thayer N."/>
            <person name="Thompson L.S."/>
            <person name="Tice H."/>
            <person name="Torney D.C."/>
            <person name="Tran-Gyamfi M."/>
            <person name="Tsai M."/>
            <person name="Ulanovsky L.E."/>
            <person name="Ustaszewska A."/>
            <person name="Vo N."/>
            <person name="White P.S."/>
            <person name="Williams A.L."/>
            <person name="Wills P.L."/>
            <person name="Wu J.-R."/>
            <person name="Wu K."/>
            <person name="Yang J."/>
            <person name="DeJong P."/>
            <person name="Bruce D."/>
            <person name="Doggett N.A."/>
            <person name="Deaven L."/>
            <person name="Schmutz J."/>
            <person name="Grimwood J."/>
            <person name="Richardson P."/>
            <person name="Rokhsar D.S."/>
            <person name="Eichler E.E."/>
            <person name="Gilna P."/>
            <person name="Lucas S.M."/>
            <person name="Myers R.M."/>
            <person name="Rubin E.M."/>
            <person name="Pennacchio L.A."/>
        </authorList>
    </citation>
    <scope>NUCLEOTIDE SEQUENCE [LARGE SCALE GENOMIC DNA]</scope>
</reference>
<reference key="4">
    <citation type="submission" date="2005-09" db="EMBL/GenBank/DDBJ databases">
        <authorList>
            <person name="Mural R.J."/>
            <person name="Istrail S."/>
            <person name="Sutton G.G."/>
            <person name="Florea L."/>
            <person name="Halpern A.L."/>
            <person name="Mobarry C.M."/>
            <person name="Lippert R."/>
            <person name="Walenz B."/>
            <person name="Shatkay H."/>
            <person name="Dew I."/>
            <person name="Miller J.R."/>
            <person name="Flanigan M.J."/>
            <person name="Edwards N.J."/>
            <person name="Bolanos R."/>
            <person name="Fasulo D."/>
            <person name="Halldorsson B.V."/>
            <person name="Hannenhalli S."/>
            <person name="Turner R."/>
            <person name="Yooseph S."/>
            <person name="Lu F."/>
            <person name="Nusskern D.R."/>
            <person name="Shue B.C."/>
            <person name="Zheng X.H."/>
            <person name="Zhong F."/>
            <person name="Delcher A.L."/>
            <person name="Huson D.H."/>
            <person name="Kravitz S.A."/>
            <person name="Mouchard L."/>
            <person name="Reinert K."/>
            <person name="Remington K.A."/>
            <person name="Clark A.G."/>
            <person name="Waterman M.S."/>
            <person name="Eichler E.E."/>
            <person name="Adams M.D."/>
            <person name="Hunkapiller M.W."/>
            <person name="Myers E.W."/>
            <person name="Venter J.C."/>
        </authorList>
    </citation>
    <scope>NUCLEOTIDE SEQUENCE [LARGE SCALE GENOMIC DNA]</scope>
</reference>
<reference key="5">
    <citation type="journal article" date="2004" name="Genome Res.">
        <title>The status, quality, and expansion of the NIH full-length cDNA project: the Mammalian Gene Collection (MGC).</title>
        <authorList>
            <consortium name="The MGC Project Team"/>
        </authorList>
    </citation>
    <scope>NUCLEOTIDE SEQUENCE [LARGE SCALE MRNA]</scope>
    <source>
        <tissue>Brain</tissue>
        <tissue>Cervix</tissue>
        <tissue>Lung</tissue>
    </source>
</reference>
<reference key="6">
    <citation type="journal article" date="2002" name="Mol. Biol. Cell">
        <title>Functional proteomic analysis of human nucleolus.</title>
        <authorList>
            <person name="Scherl A."/>
            <person name="Coute Y."/>
            <person name="Deon C."/>
            <person name="Calle A."/>
            <person name="Kindbeiter K."/>
            <person name="Sanchez J.-C."/>
            <person name="Greco A."/>
            <person name="Hochstrasser D.F."/>
            <person name="Diaz J.-J."/>
        </authorList>
    </citation>
    <scope>SUBCELLULAR LOCATION [LARGE SCALE ANALYSIS]</scope>
    <source>
        <tissue>Cervix carcinoma</tissue>
    </source>
</reference>
<reference key="7">
    <citation type="journal article" date="2012" name="Proc. Natl. Acad. Sci. U.S.A.">
        <title>N-terminal acetylome analyses and functional insights of the N-terminal acetyltransferase NatB.</title>
        <authorList>
            <person name="Van Damme P."/>
            <person name="Lasa M."/>
            <person name="Polevoda B."/>
            <person name="Gazquez C."/>
            <person name="Elosegui-Artola A."/>
            <person name="Kim D.S."/>
            <person name="De Juan-Pardo E."/>
            <person name="Demeyer K."/>
            <person name="Hole K."/>
            <person name="Larrea E."/>
            <person name="Timmerman E."/>
            <person name="Prieto J."/>
            <person name="Arnesen T."/>
            <person name="Sherman F."/>
            <person name="Gevaert K."/>
            <person name="Aldabe R."/>
        </authorList>
    </citation>
    <scope>ACETYLATION [LARGE SCALE ANALYSIS] AT ALA-2</scope>
    <scope>CLEAVAGE OF INITIATOR METHIONINE [LARGE SCALE ANALYSIS]</scope>
    <scope>IDENTIFICATION BY MASS SPECTROMETRY [LARGE SCALE ANALYSIS]</scope>
</reference>
<reference key="8">
    <citation type="journal article" date="2013" name="J. Proteome Res.">
        <title>Toward a comprehensive characterization of a human cancer cell phosphoproteome.</title>
        <authorList>
            <person name="Zhou H."/>
            <person name="Di Palma S."/>
            <person name="Preisinger C."/>
            <person name="Peng M."/>
            <person name="Polat A.N."/>
            <person name="Heck A.J."/>
            <person name="Mohammed S."/>
        </authorList>
    </citation>
    <scope>PHOSPHORYLATION [LARGE SCALE ANALYSIS] AT SER-257</scope>
    <scope>IDENTIFICATION BY MASS SPECTROMETRY [LARGE SCALE ANALYSIS]</scope>
    <source>
        <tissue>Cervix carcinoma</tissue>
        <tissue>Erythroleukemia</tissue>
    </source>
</reference>
<reference key="9">
    <citation type="journal article" date="2017" name="Nat. Struct. Mol. Biol.">
        <title>Site-specific mapping of the human SUMO proteome reveals co-modification with phosphorylation.</title>
        <authorList>
            <person name="Hendriks I.A."/>
            <person name="Lyon D."/>
            <person name="Young C."/>
            <person name="Jensen L.J."/>
            <person name="Vertegaal A.C."/>
            <person name="Nielsen M.L."/>
        </authorList>
    </citation>
    <scope>SUMOYLATION [LARGE SCALE ANALYSIS] AT LYS-407</scope>
    <scope>IDENTIFICATION BY MASS SPECTROMETRY [LARGE SCALE ANALYSIS]</scope>
</reference>
<reference evidence="6 7 8" key="10">
    <citation type="journal article" date="2021" name="Science">
        <title>Nucleolar maturation of the human small subunit processome.</title>
        <authorList>
            <person name="Singh S."/>
            <person name="Vanden Broeck A."/>
            <person name="Miller L."/>
            <person name="Chaker-Margot M."/>
            <person name="Klinge S."/>
        </authorList>
    </citation>
    <scope>STRUCTURE BY ELECTRON MICROSCOPY (2.70 ANGSTROMS)</scope>
    <scope>FUNCTION</scope>
    <scope>SUBUNIT</scope>
    <scope>SUBCELLULAR LOCATION</scope>
</reference>